<evidence type="ECO:0000250" key="1"/>
<evidence type="ECO:0000255" key="2"/>
<evidence type="ECO:0000256" key="3">
    <source>
        <dbReference type="SAM" id="MobiDB-lite"/>
    </source>
</evidence>
<evidence type="ECO:0000269" key="4">
    <source>
    </source>
</evidence>
<evidence type="ECO:0000269" key="5">
    <source>
    </source>
</evidence>
<evidence type="ECO:0000269" key="6">
    <source ref="7"/>
</evidence>
<evidence type="ECO:0000305" key="7"/>
<reference key="1">
    <citation type="journal article" date="2004" name="Plant Cell Physiol.">
        <title>VOZ; isolation and characterization of novel vascular plant transcription factors with a one-zinc finger from Arabidopsis thaliana.</title>
        <authorList>
            <person name="Mitsuda N."/>
            <person name="Hisabori T."/>
            <person name="Takeyasu K."/>
            <person name="Sato M.H."/>
        </authorList>
    </citation>
    <scope>NUCLEOTIDE SEQUENCE [MRNA]</scope>
    <scope>DNA-BINDING</scope>
    <scope>DOMAIN</scope>
    <scope>FUNCTION</scope>
    <scope>TISSUE SPECIFICITY</scope>
</reference>
<reference key="2">
    <citation type="journal article" date="2000" name="Nature">
        <title>Sequence and analysis of chromosome 1 of the plant Arabidopsis thaliana.</title>
        <authorList>
            <person name="Theologis A."/>
            <person name="Ecker J.R."/>
            <person name="Palm C.J."/>
            <person name="Federspiel N.A."/>
            <person name="Kaul S."/>
            <person name="White O."/>
            <person name="Alonso J."/>
            <person name="Altafi H."/>
            <person name="Araujo R."/>
            <person name="Bowman C.L."/>
            <person name="Brooks S.Y."/>
            <person name="Buehler E."/>
            <person name="Chan A."/>
            <person name="Chao Q."/>
            <person name="Chen H."/>
            <person name="Cheuk R.F."/>
            <person name="Chin C.W."/>
            <person name="Chung M.K."/>
            <person name="Conn L."/>
            <person name="Conway A.B."/>
            <person name="Conway A.R."/>
            <person name="Creasy T.H."/>
            <person name="Dewar K."/>
            <person name="Dunn P."/>
            <person name="Etgu P."/>
            <person name="Feldblyum T.V."/>
            <person name="Feng J.-D."/>
            <person name="Fong B."/>
            <person name="Fujii C.Y."/>
            <person name="Gill J.E."/>
            <person name="Goldsmith A.D."/>
            <person name="Haas B."/>
            <person name="Hansen N.F."/>
            <person name="Hughes B."/>
            <person name="Huizar L."/>
            <person name="Hunter J.L."/>
            <person name="Jenkins J."/>
            <person name="Johnson-Hopson C."/>
            <person name="Khan S."/>
            <person name="Khaykin E."/>
            <person name="Kim C.J."/>
            <person name="Koo H.L."/>
            <person name="Kremenetskaia I."/>
            <person name="Kurtz D.B."/>
            <person name="Kwan A."/>
            <person name="Lam B."/>
            <person name="Langin-Hooper S."/>
            <person name="Lee A."/>
            <person name="Lee J.M."/>
            <person name="Lenz C.A."/>
            <person name="Li J.H."/>
            <person name="Li Y.-P."/>
            <person name="Lin X."/>
            <person name="Liu S.X."/>
            <person name="Liu Z.A."/>
            <person name="Luros J.S."/>
            <person name="Maiti R."/>
            <person name="Marziali A."/>
            <person name="Militscher J."/>
            <person name="Miranda M."/>
            <person name="Nguyen M."/>
            <person name="Nierman W.C."/>
            <person name="Osborne B.I."/>
            <person name="Pai G."/>
            <person name="Peterson J."/>
            <person name="Pham P.K."/>
            <person name="Rizzo M."/>
            <person name="Rooney T."/>
            <person name="Rowley D."/>
            <person name="Sakano H."/>
            <person name="Salzberg S.L."/>
            <person name="Schwartz J.R."/>
            <person name="Shinn P."/>
            <person name="Southwick A.M."/>
            <person name="Sun H."/>
            <person name="Tallon L.J."/>
            <person name="Tambunga G."/>
            <person name="Toriumi M.J."/>
            <person name="Town C.D."/>
            <person name="Utterback T."/>
            <person name="Van Aken S."/>
            <person name="Vaysberg M."/>
            <person name="Vysotskaia V.S."/>
            <person name="Walker M."/>
            <person name="Wu D."/>
            <person name="Yu G."/>
            <person name="Fraser C.M."/>
            <person name="Venter J.C."/>
            <person name="Davis R.W."/>
        </authorList>
    </citation>
    <scope>NUCLEOTIDE SEQUENCE [LARGE SCALE GENOMIC DNA]</scope>
    <source>
        <strain>cv. Columbia</strain>
    </source>
</reference>
<reference key="3">
    <citation type="journal article" date="2017" name="Plant J.">
        <title>Araport11: a complete reannotation of the Arabidopsis thaliana reference genome.</title>
        <authorList>
            <person name="Cheng C.Y."/>
            <person name="Krishnakumar V."/>
            <person name="Chan A.P."/>
            <person name="Thibaud-Nissen F."/>
            <person name="Schobel S."/>
            <person name="Town C.D."/>
        </authorList>
    </citation>
    <scope>GENOME REANNOTATION</scope>
    <source>
        <strain>cv. Columbia</strain>
    </source>
</reference>
<reference key="4">
    <citation type="submission" date="2004-12" db="EMBL/GenBank/DDBJ databases">
        <title>Arabidopsis ORF clones.</title>
        <authorList>
            <person name="Cheuk R.F."/>
            <person name="Chen H."/>
            <person name="Kim C.J."/>
            <person name="Shinn P."/>
            <person name="Ecker J.R."/>
        </authorList>
    </citation>
    <scope>NUCLEOTIDE SEQUENCE [LARGE SCALE MRNA]</scope>
    <source>
        <strain>cv. Columbia</strain>
    </source>
</reference>
<reference key="5">
    <citation type="submission" date="2006-07" db="EMBL/GenBank/DDBJ databases">
        <title>Large-scale analysis of RIKEN Arabidopsis full-length (RAFL) cDNAs.</title>
        <authorList>
            <person name="Totoki Y."/>
            <person name="Seki M."/>
            <person name="Ishida J."/>
            <person name="Nakajima M."/>
            <person name="Enju A."/>
            <person name="Kamiya A."/>
            <person name="Narusaka M."/>
            <person name="Shin-i T."/>
            <person name="Nakagawa M."/>
            <person name="Sakamoto N."/>
            <person name="Oishi K."/>
            <person name="Kohara Y."/>
            <person name="Kobayashi M."/>
            <person name="Toyoda A."/>
            <person name="Sakaki Y."/>
            <person name="Sakurai T."/>
            <person name="Iida K."/>
            <person name="Akiyama K."/>
            <person name="Satou M."/>
            <person name="Toyoda T."/>
            <person name="Konagaya A."/>
            <person name="Carninci P."/>
            <person name="Kawai J."/>
            <person name="Hayashizaki Y."/>
            <person name="Shinozaki K."/>
        </authorList>
    </citation>
    <scope>NUCLEOTIDE SEQUENCE [LARGE SCALE MRNA]</scope>
    <source>
        <strain>cv. Columbia</strain>
    </source>
</reference>
<reference key="6">
    <citation type="journal article" date="2009" name="DNA Res.">
        <title>Analysis of multiple occurrences of alternative splicing events in Arabidopsis thaliana using novel sequenced full-length cDNAs.</title>
        <authorList>
            <person name="Iida K."/>
            <person name="Fukami-Kobayashi K."/>
            <person name="Toyoda A."/>
            <person name="Sakaki Y."/>
            <person name="Kobayashi M."/>
            <person name="Seki M."/>
            <person name="Shinozaki K."/>
        </authorList>
    </citation>
    <scope>NUCLEOTIDE SEQUENCE [LARGE SCALE MRNA] OF 1-478</scope>
    <source>
        <strain>cv. Columbia</strain>
    </source>
</reference>
<reference key="7">
    <citation type="journal article" date="2005" name="Plant Sci.">
        <title>DNA-binding specificity and molecular functions of NAC transcription factors.</title>
        <authorList>
            <person name="Olsena A.N."/>
            <person name="Ernstb H.A."/>
            <person name="Leggiob L.L."/>
            <person name="Skriver K."/>
        </authorList>
    </citation>
    <scope>DOMAIN VOZ</scope>
</reference>
<reference key="8">
    <citation type="journal article" date="2010" name="Biochem. J.">
        <title>The Arabidopsis thaliana NAC transcription factor family: structure-function relationships and determinants of ANAC019 stress signalling.</title>
        <authorList>
            <person name="Jensen M.K."/>
            <person name="Kjaersgaard T."/>
            <person name="Nielsen M.M."/>
            <person name="Galberg P."/>
            <person name="Petersen K."/>
            <person name="O'Shea C."/>
            <person name="Skriver K."/>
        </authorList>
    </citation>
    <scope>DNA-BINDING</scope>
</reference>
<reference key="9">
    <citation type="journal article" date="2012" name="Plant Cell">
        <title>The phytochrome-interacting VASCULAR PLANT ONE-ZINC FINGER1 and VOZ2 redundantly regulate flowering in Arabidopsis.</title>
        <authorList>
            <person name="Yasui Y."/>
            <person name="Mukougawa K."/>
            <person name="Uemoto M."/>
            <person name="Yokofuji A."/>
            <person name="Suzuri R."/>
            <person name="Nishitani A."/>
            <person name="Kohchi T."/>
        </authorList>
    </citation>
    <scope>INTERACTION WITH PHYB</scope>
    <scope>DISRUPTION PHENOTYPE</scope>
    <scope>FUNCTION</scope>
    <scope>TISSUE SPECIFICITY</scope>
    <scope>INDUCTION</scope>
</reference>
<feature type="chain" id="PRO_0000420172" description="Transcription factor VOZ1">
    <location>
        <begin position="1"/>
        <end position="486"/>
    </location>
</feature>
<feature type="zinc finger region" description="C3H1-type; atypical" evidence="2">
    <location>
        <begin position="217"/>
        <end position="240"/>
    </location>
</feature>
<feature type="region of interest" description="VOZ">
    <location>
        <begin position="208"/>
        <end position="405"/>
    </location>
</feature>
<feature type="region of interest" description="Disordered" evidence="3">
    <location>
        <begin position="424"/>
        <end position="445"/>
    </location>
</feature>
<feature type="compositionally biased region" description="Low complexity" evidence="3">
    <location>
        <begin position="429"/>
        <end position="438"/>
    </location>
</feature>
<feature type="binding site" evidence="2">
    <location>
        <position position="217"/>
    </location>
    <ligand>
        <name>Zn(2+)</name>
        <dbReference type="ChEBI" id="CHEBI:29105"/>
    </ligand>
</feature>
<feature type="binding site" evidence="2">
    <location>
        <position position="222"/>
    </location>
    <ligand>
        <name>Zn(2+)</name>
        <dbReference type="ChEBI" id="CHEBI:29105"/>
    </ligand>
</feature>
<feature type="binding site" evidence="2">
    <location>
        <position position="236"/>
    </location>
    <ligand>
        <name>Zn(2+)</name>
        <dbReference type="ChEBI" id="CHEBI:29105"/>
    </ligand>
</feature>
<feature type="binding site" evidence="2">
    <location>
        <position position="240"/>
    </location>
    <ligand>
        <name>Zn(2+)</name>
        <dbReference type="ChEBI" id="CHEBI:29105"/>
    </ligand>
</feature>
<feature type="sequence conflict" description="In Ref. 6; BAH19700." evidence="7" ref="6">
    <original>N</original>
    <variation>K</variation>
    <location>
        <position position="474"/>
    </location>
</feature>
<protein>
    <recommendedName>
        <fullName>Transcription factor VOZ1</fullName>
    </recommendedName>
    <alternativeName>
        <fullName>Protein VASCULAR PLANT ONE-ZINC FINGER 1</fullName>
        <shortName>AtVOZ1</shortName>
    </alternativeName>
</protein>
<keyword id="KW-0010">Activator</keyword>
<keyword id="KW-0963">Cytoplasm</keyword>
<keyword id="KW-0238">DNA-binding</keyword>
<keyword id="KW-0479">Metal-binding</keyword>
<keyword id="KW-0539">Nucleus</keyword>
<keyword id="KW-0607">Phytochrome signaling pathway</keyword>
<keyword id="KW-1185">Reference proteome</keyword>
<keyword id="KW-0804">Transcription</keyword>
<keyword id="KW-0805">Transcription regulation</keyword>
<keyword id="KW-0862">Zinc</keyword>
<keyword id="KW-0863">Zinc-finger</keyword>
<name>VOZ1_ARATH</name>
<proteinExistence type="evidence at protein level"/>
<dbReference type="EMBL" id="AB125256">
    <property type="protein sequence ID" value="BAD17857.1"/>
    <property type="molecule type" value="mRNA"/>
</dbReference>
<dbReference type="EMBL" id="AC007508">
    <property type="protein sequence ID" value="AAF24553.1"/>
    <property type="status" value="ALT_SEQ"/>
    <property type="molecule type" value="Genomic_DNA"/>
</dbReference>
<dbReference type="EMBL" id="AC010155">
    <property type="protein sequence ID" value="AAF16771.1"/>
    <property type="molecule type" value="Genomic_DNA"/>
</dbReference>
<dbReference type="EMBL" id="CP002684">
    <property type="protein sequence ID" value="AEE30986.1"/>
    <property type="molecule type" value="Genomic_DNA"/>
</dbReference>
<dbReference type="EMBL" id="CP002684">
    <property type="protein sequence ID" value="AEE30987.1"/>
    <property type="molecule type" value="Genomic_DNA"/>
</dbReference>
<dbReference type="EMBL" id="CP002684">
    <property type="protein sequence ID" value="ANM58935.1"/>
    <property type="molecule type" value="Genomic_DNA"/>
</dbReference>
<dbReference type="EMBL" id="CP002684">
    <property type="protein sequence ID" value="ANM58936.1"/>
    <property type="molecule type" value="Genomic_DNA"/>
</dbReference>
<dbReference type="EMBL" id="BT020261">
    <property type="protein sequence ID" value="AAV84482.1"/>
    <property type="molecule type" value="mRNA"/>
</dbReference>
<dbReference type="EMBL" id="AK227014">
    <property type="protein sequence ID" value="BAE99078.1"/>
    <property type="molecule type" value="mRNA"/>
</dbReference>
<dbReference type="EMBL" id="AK317006">
    <property type="protein sequence ID" value="BAH19700.1"/>
    <property type="molecule type" value="mRNA"/>
</dbReference>
<dbReference type="PIR" id="B86411">
    <property type="entry name" value="B86411"/>
</dbReference>
<dbReference type="RefSeq" id="NP_001077618.1">
    <property type="nucleotide sequence ID" value="NM_001084149.1"/>
</dbReference>
<dbReference type="RefSeq" id="NP_001319100.1">
    <property type="nucleotide sequence ID" value="NM_001332816.1"/>
</dbReference>
<dbReference type="RefSeq" id="NP_001321335.1">
    <property type="nucleotide sequence ID" value="NM_001332818.1"/>
</dbReference>
<dbReference type="RefSeq" id="NP_174174.1">
    <property type="nucleotide sequence ID" value="NM_102620.5"/>
</dbReference>
<dbReference type="SMR" id="Q9SGQ0"/>
<dbReference type="BioGRID" id="24987">
    <property type="interactions" value="13"/>
</dbReference>
<dbReference type="FunCoup" id="Q9SGQ0">
    <property type="interactions" value="1710"/>
</dbReference>
<dbReference type="IntAct" id="Q9SGQ0">
    <property type="interactions" value="5"/>
</dbReference>
<dbReference type="STRING" id="3702.Q9SGQ0"/>
<dbReference type="PaxDb" id="3702-AT1G28520.1"/>
<dbReference type="ProteomicsDB" id="242701"/>
<dbReference type="EnsemblPlants" id="AT1G28520.1">
    <property type="protein sequence ID" value="AT1G28520.1"/>
    <property type="gene ID" value="AT1G28520"/>
</dbReference>
<dbReference type="EnsemblPlants" id="AT1G28520.2">
    <property type="protein sequence ID" value="AT1G28520.2"/>
    <property type="gene ID" value="AT1G28520"/>
</dbReference>
<dbReference type="EnsemblPlants" id="AT1G28520.4">
    <property type="protein sequence ID" value="AT1G28520.4"/>
    <property type="gene ID" value="AT1G28520"/>
</dbReference>
<dbReference type="EnsemblPlants" id="AT1G28520.5">
    <property type="protein sequence ID" value="AT1G28520.5"/>
    <property type="gene ID" value="AT1G28520"/>
</dbReference>
<dbReference type="GeneID" id="839752"/>
<dbReference type="Gramene" id="AT1G28520.1">
    <property type="protein sequence ID" value="AT1G28520.1"/>
    <property type="gene ID" value="AT1G28520"/>
</dbReference>
<dbReference type="Gramene" id="AT1G28520.2">
    <property type="protein sequence ID" value="AT1G28520.2"/>
    <property type="gene ID" value="AT1G28520"/>
</dbReference>
<dbReference type="Gramene" id="AT1G28520.4">
    <property type="protein sequence ID" value="AT1G28520.4"/>
    <property type="gene ID" value="AT1G28520"/>
</dbReference>
<dbReference type="Gramene" id="AT1G28520.5">
    <property type="protein sequence ID" value="AT1G28520.5"/>
    <property type="gene ID" value="AT1G28520"/>
</dbReference>
<dbReference type="KEGG" id="ath:AT1G28520"/>
<dbReference type="Araport" id="AT1G28520"/>
<dbReference type="TAIR" id="AT1G28520">
    <property type="gene designation" value="VOZ1"/>
</dbReference>
<dbReference type="eggNOG" id="ENOG502QPN5">
    <property type="taxonomic scope" value="Eukaryota"/>
</dbReference>
<dbReference type="HOGENOM" id="CLU_037371_1_0_1"/>
<dbReference type="InParanoid" id="Q9SGQ0"/>
<dbReference type="OMA" id="PEPDDQN"/>
<dbReference type="OrthoDB" id="1848362at2759"/>
<dbReference type="PhylomeDB" id="Q9SGQ0"/>
<dbReference type="PRO" id="PR:Q9SGQ0"/>
<dbReference type="Proteomes" id="UP000006548">
    <property type="component" value="Chromosome 1"/>
</dbReference>
<dbReference type="ExpressionAtlas" id="Q9SGQ0">
    <property type="expression patterns" value="baseline and differential"/>
</dbReference>
<dbReference type="GO" id="GO:0005737">
    <property type="term" value="C:cytoplasm"/>
    <property type="evidence" value="ECO:0007669"/>
    <property type="project" value="UniProtKB-SubCell"/>
</dbReference>
<dbReference type="GO" id="GO:0005634">
    <property type="term" value="C:nucleus"/>
    <property type="evidence" value="ECO:0007669"/>
    <property type="project" value="UniProtKB-SubCell"/>
</dbReference>
<dbReference type="GO" id="GO:0043565">
    <property type="term" value="F:sequence-specific DNA binding"/>
    <property type="evidence" value="ECO:0000314"/>
    <property type="project" value="UniProtKB"/>
</dbReference>
<dbReference type="GO" id="GO:0008270">
    <property type="term" value="F:zinc ion binding"/>
    <property type="evidence" value="ECO:0007669"/>
    <property type="project" value="UniProtKB-KW"/>
</dbReference>
<dbReference type="GO" id="GO:0009631">
    <property type="term" value="P:cold acclimation"/>
    <property type="evidence" value="ECO:0000316"/>
    <property type="project" value="CACAO"/>
</dbReference>
<dbReference type="GO" id="GO:0048574">
    <property type="term" value="P:long-day photoperiodism, flowering"/>
    <property type="evidence" value="ECO:0000315"/>
    <property type="project" value="UniProtKB"/>
</dbReference>
<dbReference type="GO" id="GO:0045893">
    <property type="term" value="P:positive regulation of DNA-templated transcription"/>
    <property type="evidence" value="ECO:0000314"/>
    <property type="project" value="TAIR"/>
</dbReference>
<dbReference type="GO" id="GO:0048578">
    <property type="term" value="P:positive regulation of long-day photoperiodism, flowering"/>
    <property type="evidence" value="ECO:0000315"/>
    <property type="project" value="UniProtKB"/>
</dbReference>
<dbReference type="GO" id="GO:0009585">
    <property type="term" value="P:red, far-red light phototransduction"/>
    <property type="evidence" value="ECO:0007669"/>
    <property type="project" value="UniProtKB-KW"/>
</dbReference>
<dbReference type="GO" id="GO:0009408">
    <property type="term" value="P:response to heat"/>
    <property type="evidence" value="ECO:0000316"/>
    <property type="project" value="CACAO"/>
</dbReference>
<dbReference type="GO" id="GO:0009651">
    <property type="term" value="P:response to salt stress"/>
    <property type="evidence" value="ECO:0000270"/>
    <property type="project" value="TAIR"/>
</dbReference>
<dbReference type="GO" id="GO:0009414">
    <property type="term" value="P:response to water deprivation"/>
    <property type="evidence" value="ECO:0000316"/>
    <property type="project" value="CACAO"/>
</dbReference>
<dbReference type="InterPro" id="IPR039277">
    <property type="entry name" value="VOZ1/VOZ2"/>
</dbReference>
<dbReference type="PANTHER" id="PTHR33873">
    <property type="entry name" value="TRANSCRIPTION FACTOR VOZ1"/>
    <property type="match status" value="1"/>
</dbReference>
<dbReference type="PANTHER" id="PTHR33873:SF1">
    <property type="entry name" value="TRANSCRIPTION FACTOR VOZ1"/>
    <property type="match status" value="1"/>
</dbReference>
<comment type="function">
    <text evidence="4 5">Transcriptional activator acting positively in the phytochrome B signaling pathway. Functions redundantly with VOZ2 to promote flowering downstream of phytochrome B (phyB). Down-regulates 'FLOWERING LOCUS C' (FLC) and up-regulates 'FLOWERING LOCUS T' (FT). Binds to the 38-bp cis-acting region of the AVP1 gene. Interacts with phyB in the cytoplasm and is translocated to the nucleus at signal transmission, where it is subjected to degradation in a phytochrome-dependent manner.</text>
</comment>
<comment type="subunit">
    <text evidence="1 5">Homodimer (By similarity). Interacts with phytochrome B (phyB).</text>
</comment>
<comment type="interaction">
    <interactant intactId="EBI-6306928">
        <id>Q9SGQ0</id>
    </interactant>
    <interactant intactId="EBI-300727">
        <id>P14713</id>
        <label>PHYB</label>
    </interactant>
    <organismsDiffer>false</organismsDiffer>
    <experiments>4</experiments>
</comment>
<comment type="subcellular location">
    <subcellularLocation>
        <location evidence="1">Cytoplasm</location>
    </subcellularLocation>
    <subcellularLocation>
        <location evidence="1">Nucleus</location>
    </subcellularLocation>
    <text evidence="1">Cytoplasmic in darkness, and translocated to the nucleus depending on the light quality mediated by phytochromes.</text>
</comment>
<comment type="tissue specificity">
    <text evidence="4 5">Ubiquitous. Expressed in the vascular bundles of various tissues, specifically in the phloem.</text>
</comment>
<comment type="induction">
    <text evidence="5">By far-red light.</text>
</comment>
<comment type="domain">
    <text evidence="4 6">The VOZ region includes a DNA-binding domain and a dimerization domain. Contains an atypical zinc-finger followed by a basic region structurally related to the NAC domain.</text>
</comment>
<comment type="disruption phenotype">
    <text evidence="5">No visible phenotype. Voz1 and voz2 double mutant displays a late flowering phenotype under long-day conditions.</text>
</comment>
<comment type="sequence caution" evidence="7">
    <conflict type="erroneous gene model prediction">
        <sequence resource="EMBL-CDS" id="AAF24553"/>
    </conflict>
</comment>
<sequence length="486" mass="54080">MTGKRSKTNCRSASHKLFKDKAKNRVDDLQGMLLDLQFARKESRPTDVTLLEEQVNQMLREWKSELNEPSPASSLQQGGTLGSFSSDICRLLQLCDEEDDATSKLAAPKPEPADQNLEAGKAAVFQRGYNLVQGKSEHGLPLVDNCKDLSLAAGNNFDGTAPLEYHQQYDLQQEFEPNFNGGFNNCPSYGVVEGPIHISNFIPTICPPPSAFLGPKCALWDCPRPAQGFDWFQDYCSSFHAALAFNEGPPGMNPVVRPGGIGLKDGLLFAALSAKAGGKDVGIPECEGAATAKSPWNAPELFDLTVLESETLREWLFFDKPRRAFESGNRKQRSLPDYNGRGWHESRKQIMVEFGGLKRSYYMDPQPLHHFEWHLYEYEINKCDACALYRLELKLVDGKKTSKGKVSNDSVADLQKQMGRLTAEFPPENNTTNTTNNNKRCIKGRPKVSTKVATGNVQNTVEQANDYGVGEEFNYLVGNLSDYYIP</sequence>
<organism>
    <name type="scientific">Arabidopsis thaliana</name>
    <name type="common">Mouse-ear cress</name>
    <dbReference type="NCBI Taxonomy" id="3702"/>
    <lineage>
        <taxon>Eukaryota</taxon>
        <taxon>Viridiplantae</taxon>
        <taxon>Streptophyta</taxon>
        <taxon>Embryophyta</taxon>
        <taxon>Tracheophyta</taxon>
        <taxon>Spermatophyta</taxon>
        <taxon>Magnoliopsida</taxon>
        <taxon>eudicotyledons</taxon>
        <taxon>Gunneridae</taxon>
        <taxon>Pentapetalae</taxon>
        <taxon>rosids</taxon>
        <taxon>malvids</taxon>
        <taxon>Brassicales</taxon>
        <taxon>Brassicaceae</taxon>
        <taxon>Camelineae</taxon>
        <taxon>Arabidopsis</taxon>
    </lineage>
</organism>
<accession>Q9SGQ0</accession>
<accession>B9DG33</accession>
<accession>Q9SHP3</accession>
<gene>
    <name type="primary">VOZ1</name>
    <name type="ordered locus">At1g28520</name>
    <name type="ORF">F1K23.24</name>
    <name type="ORF">F3M18.4</name>
</gene>